<dbReference type="EMBL" id="AY692697">
    <property type="protein sequence ID" value="AAT92716.1"/>
    <property type="molecule type" value="Genomic_DNA"/>
</dbReference>
<dbReference type="EMBL" id="Z67751">
    <property type="protein sequence ID" value="CAA91594.1"/>
    <property type="molecule type" value="Genomic_DNA"/>
</dbReference>
<dbReference type="EMBL" id="Z73606">
    <property type="protein sequence ID" value="CAA97972.1"/>
    <property type="molecule type" value="Genomic_DNA"/>
</dbReference>
<dbReference type="EMBL" id="BK006949">
    <property type="protein sequence ID" value="DAA11186.1"/>
    <property type="molecule type" value="Genomic_DNA"/>
</dbReference>
<dbReference type="PIR" id="S61014">
    <property type="entry name" value="S61014"/>
</dbReference>
<dbReference type="RefSeq" id="NP_015073.1">
    <property type="nucleotide sequence ID" value="NM_001184064.1"/>
</dbReference>
<dbReference type="BioGRID" id="35912">
    <property type="interactions" value="191"/>
</dbReference>
<dbReference type="DIP" id="DIP-8888N"/>
<dbReference type="FunCoup" id="Q12048">
    <property type="interactions" value="65"/>
</dbReference>
<dbReference type="STRING" id="4932.YPL250C"/>
<dbReference type="iPTMnet" id="Q12048"/>
<dbReference type="PaxDb" id="4932-YPL250C"/>
<dbReference type="PeptideAtlas" id="Q12048"/>
<dbReference type="EnsemblFungi" id="YPL250C_mRNA">
    <property type="protein sequence ID" value="YPL250C"/>
    <property type="gene ID" value="YPL250C"/>
</dbReference>
<dbReference type="GeneID" id="855825"/>
<dbReference type="KEGG" id="sce:YPL250C"/>
<dbReference type="AGR" id="SGD:S000006171"/>
<dbReference type="SGD" id="S000006171">
    <property type="gene designation" value="ATG41"/>
</dbReference>
<dbReference type="VEuPathDB" id="FungiDB:YPL250C"/>
<dbReference type="HOGENOM" id="CLU_149528_0_0_1"/>
<dbReference type="InParanoid" id="Q12048"/>
<dbReference type="OMA" id="STEDDCM"/>
<dbReference type="OrthoDB" id="4062000at2759"/>
<dbReference type="BioCyc" id="YEAST:G3O-34136-MONOMER"/>
<dbReference type="BioGRID-ORCS" id="855825">
    <property type="hits" value="0 hits in 10 CRISPR screens"/>
</dbReference>
<dbReference type="PRO" id="PR:Q12048"/>
<dbReference type="Proteomes" id="UP000002311">
    <property type="component" value="Chromosome XVI"/>
</dbReference>
<dbReference type="RNAct" id="Q12048">
    <property type="molecule type" value="protein"/>
</dbReference>
<dbReference type="GO" id="GO:0034045">
    <property type="term" value="C:phagophore assembly site membrane"/>
    <property type="evidence" value="ECO:0007669"/>
    <property type="project" value="UniProtKB-SubCell"/>
</dbReference>
<dbReference type="GO" id="GO:0000045">
    <property type="term" value="P:autophagosome assembly"/>
    <property type="evidence" value="ECO:0000315"/>
    <property type="project" value="SGD"/>
</dbReference>
<dbReference type="GO" id="GO:0000422">
    <property type="term" value="P:autophagy of mitochondrion"/>
    <property type="evidence" value="ECO:0000315"/>
    <property type="project" value="SGD"/>
</dbReference>
<dbReference type="GO" id="GO:0006995">
    <property type="term" value="P:cellular response to nitrogen starvation"/>
    <property type="evidence" value="ECO:0000315"/>
    <property type="project" value="SGD"/>
</dbReference>
<dbReference type="GO" id="GO:0032258">
    <property type="term" value="P:cytoplasm to vacuole targeting by the Cvt pathway"/>
    <property type="evidence" value="ECO:0000315"/>
    <property type="project" value="SGD"/>
</dbReference>
<dbReference type="GO" id="GO:0016236">
    <property type="term" value="P:macroautophagy"/>
    <property type="evidence" value="ECO:0000315"/>
    <property type="project" value="SGD"/>
</dbReference>
<accession>Q12048</accession>
<accession>D6W3C0</accession>
<organism>
    <name type="scientific">Saccharomyces cerevisiae (strain ATCC 204508 / S288c)</name>
    <name type="common">Baker's yeast</name>
    <dbReference type="NCBI Taxonomy" id="559292"/>
    <lineage>
        <taxon>Eukaryota</taxon>
        <taxon>Fungi</taxon>
        <taxon>Dikarya</taxon>
        <taxon>Ascomycota</taxon>
        <taxon>Saccharomycotina</taxon>
        <taxon>Saccharomycetes</taxon>
        <taxon>Saccharomycetales</taxon>
        <taxon>Saccharomycetaceae</taxon>
        <taxon>Saccharomyces</taxon>
    </lineage>
</organism>
<keyword id="KW-0072">Autophagy</keyword>
<keyword id="KW-0472">Membrane</keyword>
<keyword id="KW-1185">Reference proteome</keyword>
<evidence type="ECO:0000269" key="1">
    <source>
    </source>
</evidence>
<evidence type="ECO:0000269" key="2">
    <source>
    </source>
</evidence>
<evidence type="ECO:0000303" key="3">
    <source>
    </source>
</evidence>
<evidence type="ECO:0000305" key="4">
    <source>
    </source>
</evidence>
<evidence type="ECO:0000312" key="5">
    <source>
        <dbReference type="SGD" id="S000006171"/>
    </source>
</evidence>
<gene>
    <name evidence="3" type="primary">ATG41</name>
    <name evidence="3" type="synonym">ICY2</name>
    <name evidence="5" type="ordered locus">YPL250C</name>
</gene>
<feature type="chain" id="PRO_0000270559" description="Autophagy-related protein 41">
    <location>
        <begin position="1"/>
        <end position="136"/>
    </location>
</feature>
<feature type="region of interest" description="ATG9-binding" evidence="2">
    <location>
        <begin position="127"/>
        <end position="136"/>
    </location>
</feature>
<reference key="1">
    <citation type="journal article" date="1997" name="Nature">
        <title>The nucleotide sequence of Saccharomyces cerevisiae chromosome XVI.</title>
        <authorList>
            <person name="Bussey H."/>
            <person name="Storms R.K."/>
            <person name="Ahmed A."/>
            <person name="Albermann K."/>
            <person name="Allen E."/>
            <person name="Ansorge W."/>
            <person name="Araujo R."/>
            <person name="Aparicio A."/>
            <person name="Barrell B.G."/>
            <person name="Badcock K."/>
            <person name="Benes V."/>
            <person name="Botstein D."/>
            <person name="Bowman S."/>
            <person name="Brueckner M."/>
            <person name="Carpenter J."/>
            <person name="Cherry J.M."/>
            <person name="Chung E."/>
            <person name="Churcher C.M."/>
            <person name="Coster F."/>
            <person name="Davis K."/>
            <person name="Davis R.W."/>
            <person name="Dietrich F.S."/>
            <person name="Delius H."/>
            <person name="DiPaolo T."/>
            <person name="Dubois E."/>
            <person name="Duesterhoeft A."/>
            <person name="Duncan M."/>
            <person name="Floeth M."/>
            <person name="Fortin N."/>
            <person name="Friesen J.D."/>
            <person name="Fritz C."/>
            <person name="Goffeau A."/>
            <person name="Hall J."/>
            <person name="Hebling U."/>
            <person name="Heumann K."/>
            <person name="Hilbert H."/>
            <person name="Hillier L.W."/>
            <person name="Hunicke-Smith S."/>
            <person name="Hyman R.W."/>
            <person name="Johnston M."/>
            <person name="Kalman S."/>
            <person name="Kleine K."/>
            <person name="Komp C."/>
            <person name="Kurdi O."/>
            <person name="Lashkari D."/>
            <person name="Lew H."/>
            <person name="Lin A."/>
            <person name="Lin D."/>
            <person name="Louis E.J."/>
            <person name="Marathe R."/>
            <person name="Messenguy F."/>
            <person name="Mewes H.-W."/>
            <person name="Mirtipati S."/>
            <person name="Moestl D."/>
            <person name="Mueller-Auer S."/>
            <person name="Namath A."/>
            <person name="Nentwich U."/>
            <person name="Oefner P."/>
            <person name="Pearson D."/>
            <person name="Petel F.X."/>
            <person name="Pohl T.M."/>
            <person name="Purnelle B."/>
            <person name="Rajandream M.A."/>
            <person name="Rechmann S."/>
            <person name="Rieger M."/>
            <person name="Riles L."/>
            <person name="Roberts D."/>
            <person name="Schaefer M."/>
            <person name="Scharfe M."/>
            <person name="Scherens B."/>
            <person name="Schramm S."/>
            <person name="Schroeder M."/>
            <person name="Sdicu A.-M."/>
            <person name="Tettelin H."/>
            <person name="Urrestarazu L.A."/>
            <person name="Ushinsky S."/>
            <person name="Vierendeels F."/>
            <person name="Vissers S."/>
            <person name="Voss H."/>
            <person name="Walsh S.V."/>
            <person name="Wambutt R."/>
            <person name="Wang Y."/>
            <person name="Wedler E."/>
            <person name="Wedler H."/>
            <person name="Winnett E."/>
            <person name="Zhong W.-W."/>
            <person name="Zollner A."/>
            <person name="Vo D.H."/>
            <person name="Hani J."/>
        </authorList>
    </citation>
    <scope>NUCLEOTIDE SEQUENCE [LARGE SCALE GENOMIC DNA]</scope>
    <source>
        <strain>ATCC 204508 / S288c</strain>
    </source>
</reference>
<reference key="2">
    <citation type="journal article" date="2014" name="G3 (Bethesda)">
        <title>The reference genome sequence of Saccharomyces cerevisiae: Then and now.</title>
        <authorList>
            <person name="Engel S.R."/>
            <person name="Dietrich F.S."/>
            <person name="Fisk D.G."/>
            <person name="Binkley G."/>
            <person name="Balakrishnan R."/>
            <person name="Costanzo M.C."/>
            <person name="Dwight S.S."/>
            <person name="Hitz B.C."/>
            <person name="Karra K."/>
            <person name="Nash R.S."/>
            <person name="Weng S."/>
            <person name="Wong E.D."/>
            <person name="Lloyd P."/>
            <person name="Skrzypek M.S."/>
            <person name="Miyasato S.R."/>
            <person name="Simison M."/>
            <person name="Cherry J.M."/>
        </authorList>
    </citation>
    <scope>GENOME REANNOTATION</scope>
    <source>
        <strain>ATCC 204508 / S288c</strain>
    </source>
</reference>
<reference key="3">
    <citation type="journal article" date="2007" name="Genome Res.">
        <title>Approaching a complete repository of sequence-verified protein-encoding clones for Saccharomyces cerevisiae.</title>
        <authorList>
            <person name="Hu Y."/>
            <person name="Rolfs A."/>
            <person name="Bhullar B."/>
            <person name="Murthy T.V.S."/>
            <person name="Zhu C."/>
            <person name="Berger M.F."/>
            <person name="Camargo A.A."/>
            <person name="Kelley F."/>
            <person name="McCarron S."/>
            <person name="Jepson D."/>
            <person name="Richardson A."/>
            <person name="Raphael J."/>
            <person name="Moreira D."/>
            <person name="Taycher E."/>
            <person name="Zuo D."/>
            <person name="Mohr S."/>
            <person name="Kane M.F."/>
            <person name="Williamson J."/>
            <person name="Simpson A.J.G."/>
            <person name="Bulyk M.L."/>
            <person name="Harlow E."/>
            <person name="Marsischky G."/>
            <person name="Kolodner R.D."/>
            <person name="LaBaer J."/>
        </authorList>
    </citation>
    <scope>NUCLEOTIDE SEQUENCE [GENOMIC DNA]</scope>
    <source>
        <strain>ATCC 204508 / S288c</strain>
    </source>
</reference>
<reference key="4">
    <citation type="journal article" date="2003" name="Nature">
        <title>Global analysis of protein expression in yeast.</title>
        <authorList>
            <person name="Ghaemmaghami S."/>
            <person name="Huh W.-K."/>
            <person name="Bower K."/>
            <person name="Howson R.W."/>
            <person name="Belle A."/>
            <person name="Dephoure N."/>
            <person name="O'Shea E.K."/>
            <person name="Weissman J.S."/>
        </authorList>
    </citation>
    <scope>LEVEL OF PROTEIN EXPRESSION [LARGE SCALE ANALYSIS]</scope>
</reference>
<reference key="5">
    <citation type="journal article" date="2009" name="Science">
        <title>Global analysis of Cdk1 substrate phosphorylation sites provides insights into evolution.</title>
        <authorList>
            <person name="Holt L.J."/>
            <person name="Tuch B.B."/>
            <person name="Villen J."/>
            <person name="Johnson A.D."/>
            <person name="Gygi S.P."/>
            <person name="Morgan D.O."/>
        </authorList>
    </citation>
    <scope>IDENTIFICATION BY MASS SPECTROMETRY [LARGE SCALE ANALYSIS]</scope>
</reference>
<reference key="6">
    <citation type="journal article" date="2015" name="Autophagy">
        <title>Atg41/Icy2 regulates autophagosome formation.</title>
        <authorList>
            <person name="Yao Z."/>
            <person name="Delorme-Axford E."/>
            <person name="Backues S.K."/>
            <person name="Klionsky D.J."/>
        </authorList>
    </citation>
    <scope>DISRUPTION PHENOTYPE</scope>
    <scope>FUNCTION</scope>
    <scope>INDUCTION</scope>
    <scope>SUBCELLULAR LOCATION</scope>
    <scope>INTERACTION WITH ATG9</scope>
    <scope>DOMAIN</scope>
</reference>
<protein>
    <recommendedName>
        <fullName evidence="3">Autophagy-related protein 41</fullName>
    </recommendedName>
    <alternativeName>
        <fullName evidence="3">Interacting with cytoskeleton protein 2</fullName>
    </alternativeName>
</protein>
<comment type="function">
    <text evidence="2">Involved in both selective and non-selective autophagy (PubMed:26565778). Does not appear to play a role in determining the size of autophagosomes, but rather influences their formation rate (PubMed:26565778). With ATG9, plays a role in the delivery of donor membrane to expanding phagophore (PubMed:26565778).</text>
</comment>
<comment type="subunit">
    <text evidence="2">Interacts with ATG9 (PubMed:26565778).</text>
</comment>
<comment type="subcellular location">
    <subcellularLocation>
        <location evidence="4">Preautophagosomal structure membrane</location>
        <topology evidence="4">Peripheral membrane protein</topology>
    </subcellularLocation>
    <text evidence="2">Shows a peri-mitochondrial distribution similar to ATG9 (PubMed:26565778).</text>
</comment>
<comment type="induction">
    <text evidence="2">Expression is dramatically increased under nitrogen starvation conditions and is regulated by the transcription factor GCN4 (PubMed:26565778).</text>
</comment>
<comment type="domain">
    <text evidence="2">The C-terminal 10 residues are required for the association with ATG9 (PubMed:26565778).</text>
</comment>
<comment type="disruption phenotype">
    <text evidence="2">Reduces the autophagy flux induced by nitrogen starvation as well as the flux of the cytoplasm-to-vacuole targeting (cvt) pathway (PubMed:26565778).</text>
</comment>
<comment type="miscellaneous">
    <text evidence="1">Present with 450 molecules/cell in log phase SD medium.</text>
</comment>
<name>ATG41_YEAST</name>
<proteinExistence type="evidence at protein level"/>
<sequence length="136" mass="14986">MSSVESSPISRYEDEVFPLSFSNVAFEPPMLSHSPDRSTYADDFSQSYQQELLTFPLSYPIVDESECTHTKDKTDSNIITSTEDDCMFDMEFNGNAASAVAAASKESNSASGFAFASNDAFANVAQQNYRLWLSSV</sequence>